<accession>Q4ZMG7</accession>
<protein>
    <recommendedName>
        <fullName evidence="1">Chaperone SurA</fullName>
    </recommendedName>
    <alternativeName>
        <fullName evidence="1">Peptidyl-prolyl cis-trans isomerase SurA</fullName>
        <shortName evidence="1">PPIase SurA</shortName>
        <ecNumber evidence="1">5.2.1.8</ecNumber>
    </alternativeName>
    <alternativeName>
        <fullName evidence="1">Rotamase SurA</fullName>
    </alternativeName>
</protein>
<feature type="signal peptide" evidence="1">
    <location>
        <begin position="1"/>
        <end position="13"/>
    </location>
</feature>
<feature type="chain" id="PRO_5000001282" description="Chaperone SurA">
    <location>
        <begin position="14"/>
        <end position="428"/>
    </location>
</feature>
<feature type="domain" description="PpiC 1" evidence="1">
    <location>
        <begin position="164"/>
        <end position="265"/>
    </location>
</feature>
<feature type="domain" description="PpiC 2" evidence="1">
    <location>
        <begin position="276"/>
        <end position="375"/>
    </location>
</feature>
<feature type="region of interest" description="Disordered" evidence="2">
    <location>
        <begin position="211"/>
        <end position="230"/>
    </location>
</feature>
<evidence type="ECO:0000255" key="1">
    <source>
        <dbReference type="HAMAP-Rule" id="MF_01183"/>
    </source>
</evidence>
<evidence type="ECO:0000256" key="2">
    <source>
        <dbReference type="SAM" id="MobiDB-lite"/>
    </source>
</evidence>
<evidence type="ECO:0000305" key="3"/>
<organism>
    <name type="scientific">Pseudomonas syringae pv. syringae (strain B728a)</name>
    <dbReference type="NCBI Taxonomy" id="205918"/>
    <lineage>
        <taxon>Bacteria</taxon>
        <taxon>Pseudomonadati</taxon>
        <taxon>Pseudomonadota</taxon>
        <taxon>Gammaproteobacteria</taxon>
        <taxon>Pseudomonadales</taxon>
        <taxon>Pseudomonadaceae</taxon>
        <taxon>Pseudomonas</taxon>
        <taxon>Pseudomonas syringae</taxon>
    </lineage>
</organism>
<sequence>MLGALLLSGAVHAAVQPLDSVVAIVDNDVIMKSQMDQRVREVQQTIAKRGSGVPPAEALQPQVLDRLILENLQLQMGERSGIRVSDEELNQAIGTIAQRNNMSVEQFRAALAHDGLSYNDAREQVRREMIISRVRQRRVAERIQVSQQEVKNFLASDMGKAQLSEEFHLANILIATPDSASSDAIQAAAVKAKGIYDQLKKGADFTRLAATSSSSENALEGGDMGWRKAAQLPPPFGDMLSSMPVGDVTPPARTPGGFIILKLLEKRGGQGQAQMRDEVHVRHILIKPSEIRNEEETKRLAQKIYDRIENGEDFAELAKSFSEDPGSALNGGDLNWVDPNSLVPEFRQVMSETPQGVLSKPFQTQYGWHVLEVLGRRSTDATDQAREQQALNVLRNRKYDEELQTWLRQIRDEAYVEIKLPGATQAAQ</sequence>
<name>SURA_PSEU2</name>
<reference key="1">
    <citation type="journal article" date="2005" name="Proc. Natl. Acad. Sci. U.S.A.">
        <title>Comparison of the complete genome sequences of Pseudomonas syringae pv. syringae B728a and pv. tomato DC3000.</title>
        <authorList>
            <person name="Feil H."/>
            <person name="Feil W.S."/>
            <person name="Chain P."/>
            <person name="Larimer F."/>
            <person name="Dibartolo G."/>
            <person name="Copeland A."/>
            <person name="Lykidis A."/>
            <person name="Trong S."/>
            <person name="Nolan M."/>
            <person name="Goltsman E."/>
            <person name="Thiel J."/>
            <person name="Malfatti S."/>
            <person name="Loper J.E."/>
            <person name="Lapidus A."/>
            <person name="Detter J.C."/>
            <person name="Land M."/>
            <person name="Richardson P.M."/>
            <person name="Kyrpides N.C."/>
            <person name="Ivanova N."/>
            <person name="Lindow S.E."/>
        </authorList>
    </citation>
    <scope>NUCLEOTIDE SEQUENCE [LARGE SCALE GENOMIC DNA]</scope>
    <source>
        <strain>B728a</strain>
    </source>
</reference>
<proteinExistence type="inferred from homology"/>
<dbReference type="EC" id="5.2.1.8" evidence="1"/>
<dbReference type="EMBL" id="CP000075">
    <property type="protein sequence ID" value="AAY39655.1"/>
    <property type="status" value="ALT_INIT"/>
    <property type="molecule type" value="Genomic_DNA"/>
</dbReference>
<dbReference type="RefSeq" id="YP_237693.1">
    <property type="nucleotide sequence ID" value="NC_007005.1"/>
</dbReference>
<dbReference type="SMR" id="Q4ZMG7"/>
<dbReference type="STRING" id="205918.Psyr_4625"/>
<dbReference type="KEGG" id="psb:Psyr_4625"/>
<dbReference type="PATRIC" id="fig|205918.7.peg.4770"/>
<dbReference type="eggNOG" id="COG0760">
    <property type="taxonomic scope" value="Bacteria"/>
</dbReference>
<dbReference type="HOGENOM" id="CLU_034646_11_0_6"/>
<dbReference type="OrthoDB" id="14196at2"/>
<dbReference type="Proteomes" id="UP000000426">
    <property type="component" value="Chromosome"/>
</dbReference>
<dbReference type="GO" id="GO:0030288">
    <property type="term" value="C:outer membrane-bounded periplasmic space"/>
    <property type="evidence" value="ECO:0007669"/>
    <property type="project" value="InterPro"/>
</dbReference>
<dbReference type="GO" id="GO:0042277">
    <property type="term" value="F:peptide binding"/>
    <property type="evidence" value="ECO:0007669"/>
    <property type="project" value="InterPro"/>
</dbReference>
<dbReference type="GO" id="GO:0003755">
    <property type="term" value="F:peptidyl-prolyl cis-trans isomerase activity"/>
    <property type="evidence" value="ECO:0007669"/>
    <property type="project" value="UniProtKB-UniRule"/>
</dbReference>
<dbReference type="GO" id="GO:0051082">
    <property type="term" value="F:unfolded protein binding"/>
    <property type="evidence" value="ECO:0007669"/>
    <property type="project" value="UniProtKB-UniRule"/>
</dbReference>
<dbReference type="GO" id="GO:0043165">
    <property type="term" value="P:Gram-negative-bacterium-type cell outer membrane assembly"/>
    <property type="evidence" value="ECO:0007669"/>
    <property type="project" value="InterPro"/>
</dbReference>
<dbReference type="GO" id="GO:0006457">
    <property type="term" value="P:protein folding"/>
    <property type="evidence" value="ECO:0007669"/>
    <property type="project" value="UniProtKB-UniRule"/>
</dbReference>
<dbReference type="GO" id="GO:0050821">
    <property type="term" value="P:protein stabilization"/>
    <property type="evidence" value="ECO:0007669"/>
    <property type="project" value="InterPro"/>
</dbReference>
<dbReference type="Gene3D" id="3.10.50.40">
    <property type="match status" value="2"/>
</dbReference>
<dbReference type="Gene3D" id="1.10.4030.10">
    <property type="entry name" value="Porin chaperone SurA, peptide-binding domain"/>
    <property type="match status" value="1"/>
</dbReference>
<dbReference type="HAMAP" id="MF_01183">
    <property type="entry name" value="Chaperone_SurA"/>
    <property type="match status" value="1"/>
</dbReference>
<dbReference type="InterPro" id="IPR050280">
    <property type="entry name" value="OMP_Chaperone_SurA"/>
</dbReference>
<dbReference type="InterPro" id="IPR046357">
    <property type="entry name" value="PPIase_dom_sf"/>
</dbReference>
<dbReference type="InterPro" id="IPR000297">
    <property type="entry name" value="PPIase_PpiC"/>
</dbReference>
<dbReference type="InterPro" id="IPR023034">
    <property type="entry name" value="PPIase_SurA"/>
</dbReference>
<dbReference type="InterPro" id="IPR015391">
    <property type="entry name" value="SurA_N"/>
</dbReference>
<dbReference type="InterPro" id="IPR027304">
    <property type="entry name" value="Trigger_fact/SurA_dom_sf"/>
</dbReference>
<dbReference type="PANTHER" id="PTHR47637">
    <property type="entry name" value="CHAPERONE SURA"/>
    <property type="match status" value="1"/>
</dbReference>
<dbReference type="PANTHER" id="PTHR47637:SF1">
    <property type="entry name" value="CHAPERONE SURA"/>
    <property type="match status" value="1"/>
</dbReference>
<dbReference type="Pfam" id="PF00639">
    <property type="entry name" value="Rotamase"/>
    <property type="match status" value="1"/>
</dbReference>
<dbReference type="Pfam" id="PF13616">
    <property type="entry name" value="Rotamase_3"/>
    <property type="match status" value="1"/>
</dbReference>
<dbReference type="Pfam" id="PF09312">
    <property type="entry name" value="SurA_N"/>
    <property type="match status" value="1"/>
</dbReference>
<dbReference type="SUPFAM" id="SSF54534">
    <property type="entry name" value="FKBP-like"/>
    <property type="match status" value="2"/>
</dbReference>
<dbReference type="SUPFAM" id="SSF109998">
    <property type="entry name" value="Triger factor/SurA peptide-binding domain-like"/>
    <property type="match status" value="1"/>
</dbReference>
<dbReference type="PROSITE" id="PS50198">
    <property type="entry name" value="PPIC_PPIASE_2"/>
    <property type="match status" value="2"/>
</dbReference>
<comment type="function">
    <text evidence="1">Chaperone involved in the correct folding and assembly of outer membrane proteins. Recognizes specific patterns of aromatic residues and the orientation of their side chains, which are found more frequently in integral outer membrane proteins. May act in both early periplasmic and late outer membrane-associated steps of protein maturation.</text>
</comment>
<comment type="catalytic activity">
    <reaction evidence="1">
        <text>[protein]-peptidylproline (omega=180) = [protein]-peptidylproline (omega=0)</text>
        <dbReference type="Rhea" id="RHEA:16237"/>
        <dbReference type="Rhea" id="RHEA-COMP:10747"/>
        <dbReference type="Rhea" id="RHEA-COMP:10748"/>
        <dbReference type="ChEBI" id="CHEBI:83833"/>
        <dbReference type="ChEBI" id="CHEBI:83834"/>
        <dbReference type="EC" id="5.2.1.8"/>
    </reaction>
</comment>
<comment type="subcellular location">
    <subcellularLocation>
        <location evidence="1">Periplasm</location>
    </subcellularLocation>
    <text evidence="1">Is capable of associating with the outer membrane.</text>
</comment>
<comment type="domain">
    <text evidence="1">The PPIase activity resides only in the second parvulin domain. The N-terminal region and the C-terminal tail are necessary and sufficient for the chaperone activity of SurA. The PPIase activity is dispensable for SurA to function as a chaperone. The N-terminal region and the C-terminal tail are also required for porin recognition.</text>
</comment>
<comment type="sequence caution" evidence="3">
    <conflict type="erroneous initiation">
        <sequence resource="EMBL-CDS" id="AAY39655"/>
    </conflict>
</comment>
<gene>
    <name evidence="1" type="primary">surA</name>
    <name type="ordered locus">Psyr_4625</name>
</gene>
<keyword id="KW-0143">Chaperone</keyword>
<keyword id="KW-0413">Isomerase</keyword>
<keyword id="KW-0574">Periplasm</keyword>
<keyword id="KW-0677">Repeat</keyword>
<keyword id="KW-0697">Rotamase</keyword>
<keyword id="KW-0732">Signal</keyword>